<protein>
    <recommendedName>
        <fullName evidence="1">Endoribonuclease YbeY</fullName>
        <ecNumber evidence="1">3.1.-.-</ecNumber>
    </recommendedName>
</protein>
<organism>
    <name type="scientific">Bifidobacterium longum subsp. infantis (strain ATCC 15697 / DSM 20088 / JCM 1222 / NCTC 11817 / S12)</name>
    <dbReference type="NCBI Taxonomy" id="391904"/>
    <lineage>
        <taxon>Bacteria</taxon>
        <taxon>Bacillati</taxon>
        <taxon>Actinomycetota</taxon>
        <taxon>Actinomycetes</taxon>
        <taxon>Bifidobacteriales</taxon>
        <taxon>Bifidobacteriaceae</taxon>
        <taxon>Bifidobacterium</taxon>
    </lineage>
</organism>
<gene>
    <name evidence="1" type="primary">ybeY</name>
    <name type="ordered locus">Blon_1583</name>
    <name type="ordered locus">BLIJ_1638</name>
</gene>
<keyword id="KW-0963">Cytoplasm</keyword>
<keyword id="KW-0255">Endonuclease</keyword>
<keyword id="KW-0378">Hydrolase</keyword>
<keyword id="KW-0479">Metal-binding</keyword>
<keyword id="KW-0540">Nuclease</keyword>
<keyword id="KW-0690">Ribosome biogenesis</keyword>
<keyword id="KW-0698">rRNA processing</keyword>
<keyword id="KW-0862">Zinc</keyword>
<dbReference type="EC" id="3.1.-.-" evidence="1"/>
<dbReference type="EMBL" id="CP001095">
    <property type="protein sequence ID" value="ACJ52662.1"/>
    <property type="molecule type" value="Genomic_DNA"/>
</dbReference>
<dbReference type="EMBL" id="AP010889">
    <property type="protein sequence ID" value="BAJ69220.1"/>
    <property type="molecule type" value="Genomic_DNA"/>
</dbReference>
<dbReference type="RefSeq" id="WP_012577899.1">
    <property type="nucleotide sequence ID" value="NC_011593.1"/>
</dbReference>
<dbReference type="SMR" id="B7GS82"/>
<dbReference type="KEGG" id="bln:Blon_1583"/>
<dbReference type="KEGG" id="blon:BLIJ_1638"/>
<dbReference type="PATRIC" id="fig|391904.8.peg.1652"/>
<dbReference type="HOGENOM" id="CLU_106710_3_2_11"/>
<dbReference type="Proteomes" id="UP000001360">
    <property type="component" value="Chromosome"/>
</dbReference>
<dbReference type="GO" id="GO:0005737">
    <property type="term" value="C:cytoplasm"/>
    <property type="evidence" value="ECO:0007669"/>
    <property type="project" value="UniProtKB-SubCell"/>
</dbReference>
<dbReference type="GO" id="GO:0004222">
    <property type="term" value="F:metalloendopeptidase activity"/>
    <property type="evidence" value="ECO:0007669"/>
    <property type="project" value="InterPro"/>
</dbReference>
<dbReference type="GO" id="GO:0004521">
    <property type="term" value="F:RNA endonuclease activity"/>
    <property type="evidence" value="ECO:0007669"/>
    <property type="project" value="UniProtKB-UniRule"/>
</dbReference>
<dbReference type="GO" id="GO:0008270">
    <property type="term" value="F:zinc ion binding"/>
    <property type="evidence" value="ECO:0007669"/>
    <property type="project" value="UniProtKB-UniRule"/>
</dbReference>
<dbReference type="GO" id="GO:0006364">
    <property type="term" value="P:rRNA processing"/>
    <property type="evidence" value="ECO:0007669"/>
    <property type="project" value="UniProtKB-UniRule"/>
</dbReference>
<dbReference type="Gene3D" id="3.40.390.30">
    <property type="entry name" value="Metalloproteases ('zincins'), catalytic domain"/>
    <property type="match status" value="1"/>
</dbReference>
<dbReference type="HAMAP" id="MF_00009">
    <property type="entry name" value="Endoribonucl_YbeY"/>
    <property type="match status" value="1"/>
</dbReference>
<dbReference type="InterPro" id="IPR023091">
    <property type="entry name" value="MetalPrtase_cat_dom_sf_prd"/>
</dbReference>
<dbReference type="InterPro" id="IPR002036">
    <property type="entry name" value="YbeY"/>
</dbReference>
<dbReference type="InterPro" id="IPR020549">
    <property type="entry name" value="YbeY_CS"/>
</dbReference>
<dbReference type="NCBIfam" id="TIGR00043">
    <property type="entry name" value="rRNA maturation RNase YbeY"/>
    <property type="match status" value="1"/>
</dbReference>
<dbReference type="PANTHER" id="PTHR46986">
    <property type="entry name" value="ENDORIBONUCLEASE YBEY, CHLOROPLASTIC"/>
    <property type="match status" value="1"/>
</dbReference>
<dbReference type="PANTHER" id="PTHR46986:SF1">
    <property type="entry name" value="ENDORIBONUCLEASE YBEY, CHLOROPLASTIC"/>
    <property type="match status" value="1"/>
</dbReference>
<dbReference type="Pfam" id="PF02130">
    <property type="entry name" value="YbeY"/>
    <property type="match status" value="1"/>
</dbReference>
<dbReference type="SUPFAM" id="SSF55486">
    <property type="entry name" value="Metalloproteases ('zincins'), catalytic domain"/>
    <property type="match status" value="1"/>
</dbReference>
<dbReference type="PROSITE" id="PS01306">
    <property type="entry name" value="UPF0054"/>
    <property type="match status" value="1"/>
</dbReference>
<evidence type="ECO:0000255" key="1">
    <source>
        <dbReference type="HAMAP-Rule" id="MF_00009"/>
    </source>
</evidence>
<proteinExistence type="inferred from homology"/>
<sequence>MSVDVTNETQWVIDPKVFSDLGIWVLDQMRVSTQSDLTIMFVDPNPIAELHMRWMNLEGPTDVMSFPMDELRPGDGKTVMEGVLGDIVICPWVAAQQAAAAGHSTMQEMLLLTIHGILHLLGYDHVTPEQERQMFGLQRQLLLTFFALRHDANVQATLPAGTPDALALYDAAHGAGRDLDSK</sequence>
<comment type="function">
    <text evidence="1">Single strand-specific metallo-endoribonuclease involved in late-stage 70S ribosome quality control and in maturation of the 3' terminus of the 16S rRNA.</text>
</comment>
<comment type="cofactor">
    <cofactor evidence="1">
        <name>Zn(2+)</name>
        <dbReference type="ChEBI" id="CHEBI:29105"/>
    </cofactor>
    <text evidence="1">Binds 1 zinc ion.</text>
</comment>
<comment type="subcellular location">
    <subcellularLocation>
        <location evidence="1">Cytoplasm</location>
    </subcellularLocation>
</comment>
<comment type="similarity">
    <text evidence="1">Belongs to the endoribonuclease YbeY family.</text>
</comment>
<name>YBEY_BIFLS</name>
<reference key="1">
    <citation type="journal article" date="2008" name="Proc. Natl. Acad. Sci. U.S.A.">
        <title>The genome sequence of Bifidobacterium longum subsp. infantis reveals adaptations for milk utilization within the infant microbiome.</title>
        <authorList>
            <person name="Sela D.A."/>
            <person name="Chapman J."/>
            <person name="Adeuya A."/>
            <person name="Kim J.H."/>
            <person name="Chen F."/>
            <person name="Whitehead T.R."/>
            <person name="Lapidus A."/>
            <person name="Rokhsar D.S."/>
            <person name="Lebrilla C.B."/>
            <person name="German J.B."/>
            <person name="Price N.P."/>
            <person name="Richardson P.M."/>
            <person name="Mills D.A."/>
        </authorList>
    </citation>
    <scope>NUCLEOTIDE SEQUENCE [LARGE SCALE GENOMIC DNA]</scope>
    <source>
        <strain>ATCC 15697 / DSM 20088 / JCM 1222 / NCTC 11817 / S12</strain>
    </source>
</reference>
<reference key="2">
    <citation type="journal article" date="2011" name="Nature">
        <title>Bifidobacteria can protect from enteropathogenic infection through production of acetate.</title>
        <authorList>
            <person name="Fukuda S."/>
            <person name="Toh H."/>
            <person name="Hase K."/>
            <person name="Oshima K."/>
            <person name="Nakanishi Y."/>
            <person name="Yoshimura K."/>
            <person name="Tobe T."/>
            <person name="Clarke J.M."/>
            <person name="Topping D.L."/>
            <person name="Suzuki T."/>
            <person name="Taylor T.D."/>
            <person name="Itoh K."/>
            <person name="Kikuchi J."/>
            <person name="Morita H."/>
            <person name="Hattori M."/>
            <person name="Ohno H."/>
        </authorList>
    </citation>
    <scope>NUCLEOTIDE SEQUENCE [LARGE SCALE GENOMIC DNA]</scope>
    <source>
        <strain>ATCC 15697 / DSM 20088 / JCM 1222 / NCTC 11817 / S12</strain>
    </source>
</reference>
<accession>B7GS82</accession>
<accession>E8MKZ3</accession>
<feature type="chain" id="PRO_1000199955" description="Endoribonuclease YbeY">
    <location>
        <begin position="1"/>
        <end position="182"/>
    </location>
</feature>
<feature type="binding site" evidence="1">
    <location>
        <position position="115"/>
    </location>
    <ligand>
        <name>Zn(2+)</name>
        <dbReference type="ChEBI" id="CHEBI:29105"/>
        <note>catalytic</note>
    </ligand>
</feature>
<feature type="binding site" evidence="1">
    <location>
        <position position="119"/>
    </location>
    <ligand>
        <name>Zn(2+)</name>
        <dbReference type="ChEBI" id="CHEBI:29105"/>
        <note>catalytic</note>
    </ligand>
</feature>
<feature type="binding site" evidence="1">
    <location>
        <position position="125"/>
    </location>
    <ligand>
        <name>Zn(2+)</name>
        <dbReference type="ChEBI" id="CHEBI:29105"/>
        <note>catalytic</note>
    </ligand>
</feature>